<name>AROB_SALHS</name>
<reference key="1">
    <citation type="journal article" date="2011" name="J. Bacteriol.">
        <title>Comparative genomics of 28 Salmonella enterica isolates: evidence for CRISPR-mediated adaptive sublineage evolution.</title>
        <authorList>
            <person name="Fricke W.F."/>
            <person name="Mammel M.K."/>
            <person name="McDermott P.F."/>
            <person name="Tartera C."/>
            <person name="White D.G."/>
            <person name="Leclerc J.E."/>
            <person name="Ravel J."/>
            <person name="Cebula T.A."/>
        </authorList>
    </citation>
    <scope>NUCLEOTIDE SEQUENCE [LARGE SCALE GENOMIC DNA]</scope>
    <source>
        <strain>SL476</strain>
    </source>
</reference>
<comment type="function">
    <text evidence="1">Catalyzes the conversion of 3-deoxy-D-arabino-heptulosonate 7-phosphate (DAHP) to dehydroquinate (DHQ).</text>
</comment>
<comment type="catalytic activity">
    <reaction evidence="1">
        <text>7-phospho-2-dehydro-3-deoxy-D-arabino-heptonate = 3-dehydroquinate + phosphate</text>
        <dbReference type="Rhea" id="RHEA:21968"/>
        <dbReference type="ChEBI" id="CHEBI:32364"/>
        <dbReference type="ChEBI" id="CHEBI:43474"/>
        <dbReference type="ChEBI" id="CHEBI:58394"/>
        <dbReference type="EC" id="4.2.3.4"/>
    </reaction>
</comment>
<comment type="cofactor">
    <cofactor evidence="1">
        <name>Co(2+)</name>
        <dbReference type="ChEBI" id="CHEBI:48828"/>
    </cofactor>
    <cofactor evidence="1">
        <name>Zn(2+)</name>
        <dbReference type="ChEBI" id="CHEBI:29105"/>
    </cofactor>
    <text evidence="1">Binds 1 divalent metal cation per subunit. Can use either Co(2+) or Zn(2+).</text>
</comment>
<comment type="cofactor">
    <cofactor evidence="1">
        <name>NAD(+)</name>
        <dbReference type="ChEBI" id="CHEBI:57540"/>
    </cofactor>
</comment>
<comment type="pathway">
    <text evidence="1">Metabolic intermediate biosynthesis; chorismate biosynthesis; chorismate from D-erythrose 4-phosphate and phosphoenolpyruvate: step 2/7.</text>
</comment>
<comment type="subcellular location">
    <subcellularLocation>
        <location evidence="1">Cytoplasm</location>
    </subcellularLocation>
</comment>
<comment type="similarity">
    <text evidence="1">Belongs to the sugar phosphate cyclases superfamily. Dehydroquinate synthase family.</text>
</comment>
<accession>B4TKR2</accession>
<sequence>MERITVTLGERSYPITIAAGLFNEPASFLPLKSGDQVMLVTNETLAPLYLDKVRGVLERAGVNVDSVILPDGEQYKSLTVLDTVFTALLKKPHGRDTTLVALGGGVIGDLTGFAAASYQRGVRFIQVPTTLLSQVDSSVGGKTAVNHPLGKNMIGAFYQPASVVVDLDCLKTLPARELASGLAEVIKYGIILDADFFTWLEGNLDALLRLDGPAMAYCIRRCCELKAEVVAADEREAGLRALLNLGHTFGHAIEAEMGYGNWLHGEAVAAGIVMAARASERLGQFSSADTQRIIALLERAGLPVNGPCEMSAQDYLPHMLRDKKVLAGELRLVLPLAIGKSEVRGGVSHEVVLSAIADCQQA</sequence>
<evidence type="ECO:0000255" key="1">
    <source>
        <dbReference type="HAMAP-Rule" id="MF_00110"/>
    </source>
</evidence>
<proteinExistence type="inferred from homology"/>
<organism>
    <name type="scientific">Salmonella heidelberg (strain SL476)</name>
    <dbReference type="NCBI Taxonomy" id="454169"/>
    <lineage>
        <taxon>Bacteria</taxon>
        <taxon>Pseudomonadati</taxon>
        <taxon>Pseudomonadota</taxon>
        <taxon>Gammaproteobacteria</taxon>
        <taxon>Enterobacterales</taxon>
        <taxon>Enterobacteriaceae</taxon>
        <taxon>Salmonella</taxon>
    </lineage>
</organism>
<keyword id="KW-0028">Amino-acid biosynthesis</keyword>
<keyword id="KW-0057">Aromatic amino acid biosynthesis</keyword>
<keyword id="KW-0170">Cobalt</keyword>
<keyword id="KW-0963">Cytoplasm</keyword>
<keyword id="KW-0456">Lyase</keyword>
<keyword id="KW-0479">Metal-binding</keyword>
<keyword id="KW-0520">NAD</keyword>
<keyword id="KW-0547">Nucleotide-binding</keyword>
<keyword id="KW-0862">Zinc</keyword>
<protein>
    <recommendedName>
        <fullName evidence="1">3-dehydroquinate synthase</fullName>
        <shortName evidence="1">DHQS</shortName>
        <ecNumber evidence="1">4.2.3.4</ecNumber>
    </recommendedName>
</protein>
<dbReference type="EC" id="4.2.3.4" evidence="1"/>
<dbReference type="EMBL" id="CP001120">
    <property type="protein sequence ID" value="ACF69625.1"/>
    <property type="molecule type" value="Genomic_DNA"/>
</dbReference>
<dbReference type="RefSeq" id="WP_000439824.1">
    <property type="nucleotide sequence ID" value="NC_011083.1"/>
</dbReference>
<dbReference type="SMR" id="B4TKR2"/>
<dbReference type="KEGG" id="seh:SeHA_C3792"/>
<dbReference type="HOGENOM" id="CLU_001201_0_2_6"/>
<dbReference type="UniPathway" id="UPA00053">
    <property type="reaction ID" value="UER00085"/>
</dbReference>
<dbReference type="Proteomes" id="UP000001866">
    <property type="component" value="Chromosome"/>
</dbReference>
<dbReference type="GO" id="GO:0005737">
    <property type="term" value="C:cytoplasm"/>
    <property type="evidence" value="ECO:0007669"/>
    <property type="project" value="UniProtKB-SubCell"/>
</dbReference>
<dbReference type="GO" id="GO:0003856">
    <property type="term" value="F:3-dehydroquinate synthase activity"/>
    <property type="evidence" value="ECO:0007669"/>
    <property type="project" value="UniProtKB-UniRule"/>
</dbReference>
<dbReference type="GO" id="GO:0046872">
    <property type="term" value="F:metal ion binding"/>
    <property type="evidence" value="ECO:0007669"/>
    <property type="project" value="UniProtKB-KW"/>
</dbReference>
<dbReference type="GO" id="GO:0000166">
    <property type="term" value="F:nucleotide binding"/>
    <property type="evidence" value="ECO:0007669"/>
    <property type="project" value="UniProtKB-KW"/>
</dbReference>
<dbReference type="GO" id="GO:0008652">
    <property type="term" value="P:amino acid biosynthetic process"/>
    <property type="evidence" value="ECO:0007669"/>
    <property type="project" value="UniProtKB-KW"/>
</dbReference>
<dbReference type="GO" id="GO:0009073">
    <property type="term" value="P:aromatic amino acid family biosynthetic process"/>
    <property type="evidence" value="ECO:0007669"/>
    <property type="project" value="UniProtKB-KW"/>
</dbReference>
<dbReference type="GO" id="GO:0009423">
    <property type="term" value="P:chorismate biosynthetic process"/>
    <property type="evidence" value="ECO:0007669"/>
    <property type="project" value="UniProtKB-UniRule"/>
</dbReference>
<dbReference type="CDD" id="cd08195">
    <property type="entry name" value="DHQS"/>
    <property type="match status" value="1"/>
</dbReference>
<dbReference type="FunFam" id="1.20.1090.10:FF:000002">
    <property type="entry name" value="3-dehydroquinate synthase"/>
    <property type="match status" value="1"/>
</dbReference>
<dbReference type="FunFam" id="3.40.50.1970:FF:000001">
    <property type="entry name" value="3-dehydroquinate synthase"/>
    <property type="match status" value="1"/>
</dbReference>
<dbReference type="Gene3D" id="3.40.50.1970">
    <property type="match status" value="1"/>
</dbReference>
<dbReference type="Gene3D" id="1.20.1090.10">
    <property type="entry name" value="Dehydroquinate synthase-like - alpha domain"/>
    <property type="match status" value="1"/>
</dbReference>
<dbReference type="HAMAP" id="MF_00110">
    <property type="entry name" value="DHQ_synthase"/>
    <property type="match status" value="1"/>
</dbReference>
<dbReference type="InterPro" id="IPR050071">
    <property type="entry name" value="Dehydroquinate_synthase"/>
</dbReference>
<dbReference type="InterPro" id="IPR016037">
    <property type="entry name" value="DHQ_synth_AroB"/>
</dbReference>
<dbReference type="InterPro" id="IPR030963">
    <property type="entry name" value="DHQ_synth_fam"/>
</dbReference>
<dbReference type="InterPro" id="IPR030960">
    <property type="entry name" value="DHQS/DOIS_N"/>
</dbReference>
<dbReference type="InterPro" id="IPR056179">
    <property type="entry name" value="DHQS_C"/>
</dbReference>
<dbReference type="NCBIfam" id="TIGR01357">
    <property type="entry name" value="aroB"/>
    <property type="match status" value="1"/>
</dbReference>
<dbReference type="PANTHER" id="PTHR43622">
    <property type="entry name" value="3-DEHYDROQUINATE SYNTHASE"/>
    <property type="match status" value="1"/>
</dbReference>
<dbReference type="PANTHER" id="PTHR43622:SF7">
    <property type="entry name" value="3-DEHYDROQUINATE SYNTHASE, CHLOROPLASTIC"/>
    <property type="match status" value="1"/>
</dbReference>
<dbReference type="Pfam" id="PF01761">
    <property type="entry name" value="DHQ_synthase"/>
    <property type="match status" value="1"/>
</dbReference>
<dbReference type="Pfam" id="PF24621">
    <property type="entry name" value="DHQS_C"/>
    <property type="match status" value="1"/>
</dbReference>
<dbReference type="PIRSF" id="PIRSF001455">
    <property type="entry name" value="DHQ_synth"/>
    <property type="match status" value="1"/>
</dbReference>
<dbReference type="SUPFAM" id="SSF56796">
    <property type="entry name" value="Dehydroquinate synthase-like"/>
    <property type="match status" value="1"/>
</dbReference>
<feature type="chain" id="PRO_1000094599" description="3-dehydroquinate synthase">
    <location>
        <begin position="1"/>
        <end position="362"/>
    </location>
</feature>
<feature type="binding site" evidence="1">
    <location>
        <begin position="71"/>
        <end position="76"/>
    </location>
    <ligand>
        <name>NAD(+)</name>
        <dbReference type="ChEBI" id="CHEBI:57540"/>
    </ligand>
</feature>
<feature type="binding site" evidence="1">
    <location>
        <begin position="105"/>
        <end position="109"/>
    </location>
    <ligand>
        <name>NAD(+)</name>
        <dbReference type="ChEBI" id="CHEBI:57540"/>
    </ligand>
</feature>
<feature type="binding site" evidence="1">
    <location>
        <begin position="129"/>
        <end position="130"/>
    </location>
    <ligand>
        <name>NAD(+)</name>
        <dbReference type="ChEBI" id="CHEBI:57540"/>
    </ligand>
</feature>
<feature type="binding site" evidence="1">
    <location>
        <position position="142"/>
    </location>
    <ligand>
        <name>NAD(+)</name>
        <dbReference type="ChEBI" id="CHEBI:57540"/>
    </ligand>
</feature>
<feature type="binding site" evidence="1">
    <location>
        <position position="151"/>
    </location>
    <ligand>
        <name>NAD(+)</name>
        <dbReference type="ChEBI" id="CHEBI:57540"/>
    </ligand>
</feature>
<feature type="binding site" evidence="1">
    <location>
        <begin position="169"/>
        <end position="172"/>
    </location>
    <ligand>
        <name>NAD(+)</name>
        <dbReference type="ChEBI" id="CHEBI:57540"/>
    </ligand>
</feature>
<feature type="binding site" evidence="1">
    <location>
        <position position="184"/>
    </location>
    <ligand>
        <name>Zn(2+)</name>
        <dbReference type="ChEBI" id="CHEBI:29105"/>
    </ligand>
</feature>
<feature type="binding site" evidence="1">
    <location>
        <position position="247"/>
    </location>
    <ligand>
        <name>Zn(2+)</name>
        <dbReference type="ChEBI" id="CHEBI:29105"/>
    </ligand>
</feature>
<feature type="binding site" evidence="1">
    <location>
        <position position="264"/>
    </location>
    <ligand>
        <name>Zn(2+)</name>
        <dbReference type="ChEBI" id="CHEBI:29105"/>
    </ligand>
</feature>
<gene>
    <name evidence="1" type="primary">aroB</name>
    <name type="ordered locus">SeHA_C3792</name>
</gene>